<proteinExistence type="evidence at protein level"/>
<reference key="1">
    <citation type="journal article" date="1998" name="J. Cell Biol.">
        <title>Caveolin-1 and -2 in the exocytic pathway of MDCK cells.</title>
        <authorList>
            <person name="Scheiffele P."/>
            <person name="Verkade P."/>
            <person name="Fra A.M."/>
            <person name="Sweet-Virta H."/>
            <person name="Simons K."/>
            <person name="Ikonen E."/>
        </authorList>
    </citation>
    <scope>NUCLEOTIDE SEQUENCE [MRNA] (ISOFORMS ALPHA AND BETA)</scope>
    <scope>PROTEIN SEQUENCE OF 24-32 AND 152-159</scope>
    <scope>PHOSPHORYLATION</scope>
    <scope>INTERACTION WITH CAV1</scope>
    <scope>SUBCELLULAR LOCATION</scope>
    <source>
        <strain>Cocker spaniel</strain>
        <tissue>Kidney</tissue>
    </source>
</reference>
<reference key="2">
    <citation type="journal article" date="2003" name="Nature">
        <title>Comparative analyses of multi-species sequences from targeted genomic regions.</title>
        <authorList>
            <person name="Thomas J.W."/>
            <person name="Touchman J.W."/>
            <person name="Blakesley R.W."/>
            <person name="Bouffard G.G."/>
            <person name="Beckstrom-Sternberg S.M."/>
            <person name="Margulies E.H."/>
            <person name="Blanchette M."/>
            <person name="Siepel A.C."/>
            <person name="Thomas P.J."/>
            <person name="McDowell J.C."/>
            <person name="Maskeri B."/>
            <person name="Hansen N.F."/>
            <person name="Schwartz M.S."/>
            <person name="Weber R.J."/>
            <person name="Kent W.J."/>
            <person name="Karolchik D."/>
            <person name="Bruen T.C."/>
            <person name="Bevan R."/>
            <person name="Cutler D.J."/>
            <person name="Schwartz S."/>
            <person name="Elnitski L."/>
            <person name="Idol J.R."/>
            <person name="Prasad A.B."/>
            <person name="Lee-Lin S.-Q."/>
            <person name="Maduro V.V.B."/>
            <person name="Summers T.J."/>
            <person name="Portnoy M.E."/>
            <person name="Dietrich N.L."/>
            <person name="Akhter N."/>
            <person name="Ayele K."/>
            <person name="Benjamin B."/>
            <person name="Cariaga K."/>
            <person name="Brinkley C.P."/>
            <person name="Brooks S.Y."/>
            <person name="Granite S."/>
            <person name="Guan X."/>
            <person name="Gupta J."/>
            <person name="Haghighi P."/>
            <person name="Ho S.-L."/>
            <person name="Huang M.C."/>
            <person name="Karlins E."/>
            <person name="Laric P.L."/>
            <person name="Legaspi R."/>
            <person name="Lim M.J."/>
            <person name="Maduro Q.L."/>
            <person name="Masiello C.A."/>
            <person name="Mastrian S.D."/>
            <person name="McCloskey J.C."/>
            <person name="Pearson R."/>
            <person name="Stantripop S."/>
            <person name="Tiongson E.E."/>
            <person name="Tran J.T."/>
            <person name="Tsurgeon C."/>
            <person name="Vogt J.L."/>
            <person name="Walker M.A."/>
            <person name="Wetherby K.D."/>
            <person name="Wiggins L.S."/>
            <person name="Young A.C."/>
            <person name="Zhang L.-H."/>
            <person name="Osoegawa K."/>
            <person name="Zhu B."/>
            <person name="Zhao B."/>
            <person name="Shu C.L."/>
            <person name="De Jong P.J."/>
            <person name="Lawrence C.E."/>
            <person name="Smit A.F."/>
            <person name="Chakravarti A."/>
            <person name="Haussler D."/>
            <person name="Green P."/>
            <person name="Miller W."/>
            <person name="Green E.D."/>
        </authorList>
    </citation>
    <scope>NUCLEOTIDE SEQUENCE [LARGE SCALE GENOMIC DNA]</scope>
</reference>
<keyword id="KW-0024">Alternative initiation</keyword>
<keyword id="KW-1003">Cell membrane</keyword>
<keyword id="KW-0963">Cytoplasm</keyword>
<keyword id="KW-0903">Direct protein sequencing</keyword>
<keyword id="KW-0333">Golgi apparatus</keyword>
<keyword id="KW-0472">Membrane</keyword>
<keyword id="KW-0539">Nucleus</keyword>
<keyword id="KW-0597">Phosphoprotein</keyword>
<keyword id="KW-1185">Reference proteome</keyword>
<dbReference type="EMBL" id="AF039223">
    <property type="protein sequence ID" value="AAB92672.1"/>
    <property type="molecule type" value="mRNA"/>
</dbReference>
<dbReference type="EMBL" id="DP000236">
    <property type="protein sequence ID" value="AAR16265.1"/>
    <property type="molecule type" value="Genomic_DNA"/>
</dbReference>
<dbReference type="RefSeq" id="NP_001010997.2">
    <molecule id="O46550-1"/>
    <property type="nucleotide sequence ID" value="NM_001010997.3"/>
</dbReference>
<dbReference type="BioGRID" id="141021">
    <property type="interactions" value="1"/>
</dbReference>
<dbReference type="FunCoup" id="O46550">
    <property type="interactions" value="260"/>
</dbReference>
<dbReference type="STRING" id="9615.ENSCAFP00000038932"/>
<dbReference type="SwissPalm" id="O46550"/>
<dbReference type="PaxDb" id="9612-ENSCAFP00000005057"/>
<dbReference type="Ensembl" id="ENSCAFT00000048990.3">
    <molecule id="O46550-1"/>
    <property type="protein sequence ID" value="ENSCAFP00000038932.1"/>
    <property type="gene ID" value="ENSCAFG00000003402.6"/>
</dbReference>
<dbReference type="Ensembl" id="ENSCAFT00030013808.1">
    <molecule id="O46550-1"/>
    <property type="protein sequence ID" value="ENSCAFP00030012051.1"/>
    <property type="gene ID" value="ENSCAFG00030007499.1"/>
</dbReference>
<dbReference type="Ensembl" id="ENSCAFT00040030363.1">
    <molecule id="O46550-1"/>
    <property type="protein sequence ID" value="ENSCAFP00040026462.1"/>
    <property type="gene ID" value="ENSCAFG00040016417.1"/>
</dbReference>
<dbReference type="Ensembl" id="ENSCAFT00845012023.1">
    <molecule id="O46550-1"/>
    <property type="protein sequence ID" value="ENSCAFP00845009384.1"/>
    <property type="gene ID" value="ENSCAFG00845006745.1"/>
</dbReference>
<dbReference type="GeneID" id="475294"/>
<dbReference type="KEGG" id="cfa:475294"/>
<dbReference type="CTD" id="858"/>
<dbReference type="VEuPathDB" id="HostDB:ENSCAFG00845006745"/>
<dbReference type="eggNOG" id="ENOG502RZYX">
    <property type="taxonomic scope" value="Eukaryota"/>
</dbReference>
<dbReference type="GeneTree" id="ENSGT00950000183006"/>
<dbReference type="HOGENOM" id="CLU_102582_2_0_1"/>
<dbReference type="InParanoid" id="O46550"/>
<dbReference type="OrthoDB" id="5917823at2759"/>
<dbReference type="Reactome" id="R-CFA-9009391">
    <property type="pathway name" value="Extra-nuclear estrogen signaling"/>
</dbReference>
<dbReference type="Proteomes" id="UP000002254">
    <property type="component" value="Chromosome 14"/>
</dbReference>
<dbReference type="Proteomes" id="UP000694429">
    <property type="component" value="Chromosome 14"/>
</dbReference>
<dbReference type="Proteomes" id="UP000694542">
    <property type="component" value="Chromosome 14"/>
</dbReference>
<dbReference type="Proteomes" id="UP000805418">
    <property type="component" value="Chromosome 14"/>
</dbReference>
<dbReference type="Bgee" id="ENSCAFG00000003402">
    <property type="expression patterns" value="Expressed in keratinocyte and 46 other cell types or tissues"/>
</dbReference>
<dbReference type="GO" id="GO:0005901">
    <property type="term" value="C:caveola"/>
    <property type="evidence" value="ECO:0000250"/>
    <property type="project" value="UniProtKB"/>
</dbReference>
<dbReference type="GO" id="GO:0031410">
    <property type="term" value="C:cytoplasmic vesicle"/>
    <property type="evidence" value="ECO:0000318"/>
    <property type="project" value="GO_Central"/>
</dbReference>
<dbReference type="GO" id="GO:0005794">
    <property type="term" value="C:Golgi apparatus"/>
    <property type="evidence" value="ECO:0000318"/>
    <property type="project" value="GO_Central"/>
</dbReference>
<dbReference type="GO" id="GO:0000139">
    <property type="term" value="C:Golgi membrane"/>
    <property type="evidence" value="ECO:0007669"/>
    <property type="project" value="UniProtKB-SubCell"/>
</dbReference>
<dbReference type="GO" id="GO:0005634">
    <property type="term" value="C:nucleus"/>
    <property type="evidence" value="ECO:0007669"/>
    <property type="project" value="UniProtKB-SubCell"/>
</dbReference>
<dbReference type="GO" id="GO:0048471">
    <property type="term" value="C:perinuclear region of cytoplasm"/>
    <property type="evidence" value="ECO:0000250"/>
    <property type="project" value="UniProtKB"/>
</dbReference>
<dbReference type="GO" id="GO:0044853">
    <property type="term" value="C:plasma membrane raft"/>
    <property type="evidence" value="ECO:0000250"/>
    <property type="project" value="UniProtKB"/>
</dbReference>
<dbReference type="GO" id="GO:0031748">
    <property type="term" value="F:D1 dopamine receptor binding"/>
    <property type="evidence" value="ECO:0000250"/>
    <property type="project" value="UniProtKB"/>
</dbReference>
<dbReference type="GO" id="GO:0060090">
    <property type="term" value="F:molecular adaptor activity"/>
    <property type="evidence" value="ECO:0000318"/>
    <property type="project" value="GO_Central"/>
</dbReference>
<dbReference type="GO" id="GO:0019901">
    <property type="term" value="F:protein kinase binding"/>
    <property type="evidence" value="ECO:0000318"/>
    <property type="project" value="GO_Central"/>
</dbReference>
<dbReference type="GO" id="GO:0070836">
    <property type="term" value="P:caveola assembly"/>
    <property type="evidence" value="ECO:0000250"/>
    <property type="project" value="UniProtKB"/>
</dbReference>
<dbReference type="GO" id="GO:0030154">
    <property type="term" value="P:cell differentiation"/>
    <property type="evidence" value="ECO:0000318"/>
    <property type="project" value="GO_Central"/>
</dbReference>
<dbReference type="GO" id="GO:0007029">
    <property type="term" value="P:endoplasmic reticulum organization"/>
    <property type="evidence" value="ECO:0000250"/>
    <property type="project" value="UniProtKB"/>
</dbReference>
<dbReference type="GO" id="GO:0008286">
    <property type="term" value="P:insulin receptor signaling pathway"/>
    <property type="evidence" value="ECO:0000318"/>
    <property type="project" value="GO_Central"/>
</dbReference>
<dbReference type="GO" id="GO:0007005">
    <property type="term" value="P:mitochondrion organization"/>
    <property type="evidence" value="ECO:0000250"/>
    <property type="project" value="UniProtKB"/>
</dbReference>
<dbReference type="GO" id="GO:0001937">
    <property type="term" value="P:negative regulation of endothelial cell proliferation"/>
    <property type="evidence" value="ECO:0000250"/>
    <property type="project" value="UniProtKB"/>
</dbReference>
<dbReference type="GO" id="GO:0060161">
    <property type="term" value="P:positive regulation of dopamine receptor signaling pathway"/>
    <property type="evidence" value="ECO:0000250"/>
    <property type="project" value="UniProtKB"/>
</dbReference>
<dbReference type="GO" id="GO:0051480">
    <property type="term" value="P:regulation of cytosolic calcium ion concentration"/>
    <property type="evidence" value="ECO:0000318"/>
    <property type="project" value="GO_Central"/>
</dbReference>
<dbReference type="GO" id="GO:0048741">
    <property type="term" value="P:skeletal muscle fiber development"/>
    <property type="evidence" value="ECO:0000250"/>
    <property type="project" value="UniProtKB"/>
</dbReference>
<dbReference type="GO" id="GO:0048278">
    <property type="term" value="P:vesicle docking"/>
    <property type="evidence" value="ECO:0000250"/>
    <property type="project" value="UniProtKB"/>
</dbReference>
<dbReference type="GO" id="GO:0006906">
    <property type="term" value="P:vesicle fusion"/>
    <property type="evidence" value="ECO:0000250"/>
    <property type="project" value="UniProtKB"/>
</dbReference>
<dbReference type="InterPro" id="IPR001612">
    <property type="entry name" value="Caveolin"/>
</dbReference>
<dbReference type="InterPro" id="IPR018361">
    <property type="entry name" value="Caveolin_CS"/>
</dbReference>
<dbReference type="PANTHER" id="PTHR10844">
    <property type="entry name" value="CAVEOLIN"/>
    <property type="match status" value="1"/>
</dbReference>
<dbReference type="PANTHER" id="PTHR10844:SF3">
    <property type="entry name" value="CAVEOLIN-2"/>
    <property type="match status" value="1"/>
</dbReference>
<dbReference type="Pfam" id="PF01146">
    <property type="entry name" value="Caveolin"/>
    <property type="match status" value="1"/>
</dbReference>
<dbReference type="PROSITE" id="PS01210">
    <property type="entry name" value="CAVEOLIN"/>
    <property type="match status" value="1"/>
</dbReference>
<sequence>MGLETEKADVQLCMDDDAYSRHSAVDFGDLEQLADSGSDRDPRRLNSHLQVGFEDVIAEPVSTHSFDKVWICSHALFEVSKYVIYKFLTLLLAMPMAFAAGVLFATLSCLHIWIIMPFVKTCLMVLPSVQTIWKSVTDAVIAPLCSSVGRSFSSVSLQVSHD</sequence>
<gene>
    <name type="primary">CAV2</name>
    <name type="synonym">CAV-2</name>
</gene>
<accession>O46550</accession>
<accession>A0M8U7</accession>
<organism>
    <name type="scientific">Canis lupus familiaris</name>
    <name type="common">Dog</name>
    <name type="synonym">Canis familiaris</name>
    <dbReference type="NCBI Taxonomy" id="9615"/>
    <lineage>
        <taxon>Eukaryota</taxon>
        <taxon>Metazoa</taxon>
        <taxon>Chordata</taxon>
        <taxon>Craniata</taxon>
        <taxon>Vertebrata</taxon>
        <taxon>Euteleostomi</taxon>
        <taxon>Mammalia</taxon>
        <taxon>Eutheria</taxon>
        <taxon>Laurasiatheria</taxon>
        <taxon>Carnivora</taxon>
        <taxon>Caniformia</taxon>
        <taxon>Canidae</taxon>
        <taxon>Canis</taxon>
    </lineage>
</organism>
<name>CAV2_CANLF</name>
<comment type="function">
    <text evidence="1">May act as a scaffolding protein within caveolar membranes. Interacts directly with G-protein alpha subunits and can functionally regulate their activity. Acts as an accessory protein in conjunction with CAV1 in targeting to lipid rafts and driving caveolae formation. The Ser-36 phosphorylated form has a role in modulating mitosis in endothelial cells. Positive regulator of cellular mitogenesis of the MAPK signaling pathway. Required for the insulin-stimulated nuclear translocation and activation of MAPK1 and STAT3, and the subsequent regulation of cell cycle progression (By similarity).</text>
</comment>
<comment type="subunit">
    <text evidence="1">Monomer or homodimer. Interacts with CAV1; the interaction forms a stable heterooligomeric complex that is required for targeting to lipid rafts and for caveolae formation. Tyrosine phosphorylated forms do not form heterooligomers with the Tyr-19-phosphorylated form existing as a monomer or dimer. Interacts (tyrosine phosphorylated form) with the SH2 domain-containing proteins, RASA1, NCK1 and SRC. Interacts (tyrosine phosphorylated form) with INSR. Interacts (Tyr-19 phosphorylated form) with MAPK1 (phosphorylated form); the interaction, promoted by insulin, leads to nuclear location and MAPK1 activation. Interacts with STAT3; the interaction is increased on insulin-induced tyrosine phosphorylation leading to STAT activation (By similarity).</text>
</comment>
<comment type="subcellular location">
    <subcellularLocation>
        <location evidence="1">Nucleus</location>
    </subcellularLocation>
    <subcellularLocation>
        <location evidence="1">Cytoplasm</location>
    </subcellularLocation>
    <subcellularLocation>
        <location evidence="5">Golgi apparatus membrane</location>
        <topology evidence="5">Peripheral membrane protein</topology>
    </subcellularLocation>
    <subcellularLocation>
        <location evidence="5">Cell membrane</location>
        <topology evidence="5">Peripheral membrane protein</topology>
    </subcellularLocation>
    <subcellularLocation>
        <location evidence="5">Membrane</location>
        <location evidence="5">Caveola</location>
        <topology evidence="5">Peripheral membrane protein</topology>
    </subcellularLocation>
    <text evidence="1">Potential hairpin-like structure in the membrane. Membrane protein of caveolae. Tyr-19-phosphorylated form is enriched at sites of cell-cell contact and is translocated to the nucleus in complex with MAPK1 in response to insulin. CAV1-mediated Ser-23-phosphorylated form locates to the plasma membrane. Ser-36-phosphorylated form resides in intracellular compartments (By similarity).</text>
</comment>
<comment type="alternative products">
    <event type="alternative initiation"/>
    <isoform>
        <id>O46550-1</id>
        <name>Alpha</name>
        <sequence type="displayed"/>
    </isoform>
    <isoform>
        <id>O46550-2</id>
        <name>Beta</name>
        <sequence type="described" ref="VSP_038113"/>
    </isoform>
</comment>
<comment type="PTM">
    <text evidence="1">Phosphorylated on serine and tyrosine residues. CAV1 promotes phosphorylation on Ser-23 which then targets the complex to the plasma membrane, lipid rafts and caveolae. Phosphorylation on Ser-36 appears to modulate mitosis in endothelial cells. Phosphorylation on Tyr-19 is required for insulin-induced phosphorylation of MAPK1 and DNA binding of STAT3. Tyrosine phosphorylation is induced by both EGF and insulin (By similarity).</text>
</comment>
<comment type="miscellaneous">
    <molecule>Isoform Alpha</molecule>
    <text>Most abundant form.</text>
</comment>
<comment type="similarity">
    <text evidence="7">Belongs to the caveolin family.</text>
</comment>
<feature type="chain" id="PRO_0000144137" description="Caveolin-2">
    <location>
        <begin position="1"/>
        <end position="162"/>
    </location>
</feature>
<feature type="topological domain" description="Cytoplasmic" evidence="4">
    <location>
        <begin position="1"/>
        <end position="86"/>
    </location>
</feature>
<feature type="intramembrane region" description="Helical" evidence="4">
    <location>
        <begin position="87"/>
        <end position="107"/>
    </location>
</feature>
<feature type="topological domain" description="Cytoplasmic" evidence="4">
    <location>
        <begin position="108"/>
        <end position="162"/>
    </location>
</feature>
<feature type="modified residue" description="Phosphotyrosine; by SRC" evidence="2">
    <location>
        <position position="19"/>
    </location>
</feature>
<feature type="modified residue" description="Phosphoserine" evidence="3">
    <location>
        <position position="20"/>
    </location>
</feature>
<feature type="modified residue" description="Phosphoserine" evidence="2">
    <location>
        <position position="23"/>
    </location>
</feature>
<feature type="modified residue" description="Phosphoserine" evidence="2">
    <location>
        <position position="36"/>
    </location>
</feature>
<feature type="splice variant" id="VSP_038113" description="In isoform Beta." evidence="6">
    <location>
        <begin position="1"/>
        <end position="13"/>
    </location>
</feature>
<feature type="sequence conflict" description="In Ref. 1; AAB92672." evidence="7" ref="1">
    <original>R</original>
    <variation>H</variation>
    <location>
        <position position="21"/>
    </location>
</feature>
<feature type="sequence conflict" description="In Ref. 1; AAB92672." evidence="7" ref="1">
    <original>EP</original>
    <variation>DA</variation>
    <location>
        <begin position="59"/>
        <end position="60"/>
    </location>
</feature>
<evidence type="ECO:0000250" key="1"/>
<evidence type="ECO:0000250" key="2">
    <source>
        <dbReference type="UniProtKB" id="P51636"/>
    </source>
</evidence>
<evidence type="ECO:0000250" key="3">
    <source>
        <dbReference type="UniProtKB" id="Q9WVC3"/>
    </source>
</evidence>
<evidence type="ECO:0000255" key="4"/>
<evidence type="ECO:0000269" key="5">
    <source>
    </source>
</evidence>
<evidence type="ECO:0000303" key="6">
    <source>
    </source>
</evidence>
<evidence type="ECO:0000305" key="7"/>
<protein>
    <recommendedName>
        <fullName>Caveolin-2</fullName>
    </recommendedName>
</protein>